<organism>
    <name type="scientific">Bordetella petrii (strain ATCC BAA-461 / DSM 12804 / CCUG 43448)</name>
    <dbReference type="NCBI Taxonomy" id="340100"/>
    <lineage>
        <taxon>Bacteria</taxon>
        <taxon>Pseudomonadati</taxon>
        <taxon>Pseudomonadota</taxon>
        <taxon>Betaproteobacteria</taxon>
        <taxon>Burkholderiales</taxon>
        <taxon>Alcaligenaceae</taxon>
        <taxon>Bordetella</taxon>
    </lineage>
</organism>
<gene>
    <name evidence="1" type="primary">grpE</name>
    <name type="ordered locus">Bpet1555</name>
</gene>
<keyword id="KW-0143">Chaperone</keyword>
<keyword id="KW-0963">Cytoplasm</keyword>
<keyword id="KW-0346">Stress response</keyword>
<dbReference type="EMBL" id="AM902716">
    <property type="protein sequence ID" value="CAP41894.1"/>
    <property type="molecule type" value="Genomic_DNA"/>
</dbReference>
<dbReference type="SMR" id="A9IGC0"/>
<dbReference type="STRING" id="94624.Bpet1555"/>
<dbReference type="KEGG" id="bpt:Bpet1555"/>
<dbReference type="eggNOG" id="COG0576">
    <property type="taxonomic scope" value="Bacteria"/>
</dbReference>
<dbReference type="Proteomes" id="UP000001225">
    <property type="component" value="Chromosome"/>
</dbReference>
<dbReference type="GO" id="GO:0005829">
    <property type="term" value="C:cytosol"/>
    <property type="evidence" value="ECO:0007669"/>
    <property type="project" value="TreeGrafter"/>
</dbReference>
<dbReference type="GO" id="GO:0000774">
    <property type="term" value="F:adenyl-nucleotide exchange factor activity"/>
    <property type="evidence" value="ECO:0007669"/>
    <property type="project" value="InterPro"/>
</dbReference>
<dbReference type="GO" id="GO:0042803">
    <property type="term" value="F:protein homodimerization activity"/>
    <property type="evidence" value="ECO:0007669"/>
    <property type="project" value="InterPro"/>
</dbReference>
<dbReference type="GO" id="GO:0051087">
    <property type="term" value="F:protein-folding chaperone binding"/>
    <property type="evidence" value="ECO:0007669"/>
    <property type="project" value="InterPro"/>
</dbReference>
<dbReference type="GO" id="GO:0051082">
    <property type="term" value="F:unfolded protein binding"/>
    <property type="evidence" value="ECO:0007669"/>
    <property type="project" value="TreeGrafter"/>
</dbReference>
<dbReference type="GO" id="GO:0006457">
    <property type="term" value="P:protein folding"/>
    <property type="evidence" value="ECO:0007669"/>
    <property type="project" value="InterPro"/>
</dbReference>
<dbReference type="CDD" id="cd00446">
    <property type="entry name" value="GrpE"/>
    <property type="match status" value="1"/>
</dbReference>
<dbReference type="FunFam" id="2.30.22.10:FF:000001">
    <property type="entry name" value="Protein GrpE"/>
    <property type="match status" value="1"/>
</dbReference>
<dbReference type="Gene3D" id="3.90.20.20">
    <property type="match status" value="1"/>
</dbReference>
<dbReference type="Gene3D" id="2.30.22.10">
    <property type="entry name" value="Head domain of nucleotide exchange factor GrpE"/>
    <property type="match status" value="1"/>
</dbReference>
<dbReference type="HAMAP" id="MF_01151">
    <property type="entry name" value="GrpE"/>
    <property type="match status" value="1"/>
</dbReference>
<dbReference type="InterPro" id="IPR000740">
    <property type="entry name" value="GrpE"/>
</dbReference>
<dbReference type="InterPro" id="IPR013805">
    <property type="entry name" value="GrpE_coiled_coil"/>
</dbReference>
<dbReference type="InterPro" id="IPR009012">
    <property type="entry name" value="GrpE_head"/>
</dbReference>
<dbReference type="NCBIfam" id="NF010737">
    <property type="entry name" value="PRK14139.1"/>
    <property type="match status" value="1"/>
</dbReference>
<dbReference type="NCBIfam" id="NF010738">
    <property type="entry name" value="PRK14140.1"/>
    <property type="match status" value="1"/>
</dbReference>
<dbReference type="NCBIfam" id="NF010748">
    <property type="entry name" value="PRK14150.1"/>
    <property type="match status" value="1"/>
</dbReference>
<dbReference type="PANTHER" id="PTHR21237">
    <property type="entry name" value="GRPE PROTEIN"/>
    <property type="match status" value="1"/>
</dbReference>
<dbReference type="PANTHER" id="PTHR21237:SF23">
    <property type="entry name" value="GRPE PROTEIN HOMOLOG, MITOCHONDRIAL"/>
    <property type="match status" value="1"/>
</dbReference>
<dbReference type="Pfam" id="PF01025">
    <property type="entry name" value="GrpE"/>
    <property type="match status" value="1"/>
</dbReference>
<dbReference type="PRINTS" id="PR00773">
    <property type="entry name" value="GRPEPROTEIN"/>
</dbReference>
<dbReference type="SUPFAM" id="SSF58014">
    <property type="entry name" value="Coiled-coil domain of nucleotide exchange factor GrpE"/>
    <property type="match status" value="1"/>
</dbReference>
<dbReference type="SUPFAM" id="SSF51064">
    <property type="entry name" value="Head domain of nucleotide exchange factor GrpE"/>
    <property type="match status" value="1"/>
</dbReference>
<dbReference type="PROSITE" id="PS01071">
    <property type="entry name" value="GRPE"/>
    <property type="match status" value="1"/>
</dbReference>
<proteinExistence type="inferred from homology"/>
<name>GRPE_BORPD</name>
<feature type="chain" id="PRO_1000137546" description="Protein GrpE">
    <location>
        <begin position="1"/>
        <end position="185"/>
    </location>
</feature>
<feature type="region of interest" description="Disordered" evidence="2">
    <location>
        <begin position="1"/>
        <end position="22"/>
    </location>
</feature>
<protein>
    <recommendedName>
        <fullName evidence="1">Protein GrpE</fullName>
    </recommendedName>
    <alternativeName>
        <fullName evidence="1">HSP-70 cofactor</fullName>
    </alternativeName>
</protein>
<accession>A9IGC0</accession>
<evidence type="ECO:0000255" key="1">
    <source>
        <dbReference type="HAMAP-Rule" id="MF_01151"/>
    </source>
</evidence>
<evidence type="ECO:0000256" key="2">
    <source>
        <dbReference type="SAM" id="MobiDB-lite"/>
    </source>
</evidence>
<comment type="function">
    <text evidence="1">Participates actively in the response to hyperosmotic and heat shock by preventing the aggregation of stress-denatured proteins, in association with DnaK and GrpE. It is the nucleotide exchange factor for DnaK and may function as a thermosensor. Unfolded proteins bind initially to DnaJ; upon interaction with the DnaJ-bound protein, DnaK hydrolyzes its bound ATP, resulting in the formation of a stable complex. GrpE releases ADP from DnaK; ATP binding to DnaK triggers the release of the substrate protein, thus completing the reaction cycle. Several rounds of ATP-dependent interactions between DnaJ, DnaK and GrpE are required for fully efficient folding.</text>
</comment>
<comment type="subunit">
    <text evidence="1">Homodimer.</text>
</comment>
<comment type="subcellular location">
    <subcellularLocation>
        <location evidence="1">Cytoplasm</location>
    </subcellularLocation>
</comment>
<comment type="similarity">
    <text evidence="1">Belongs to the GrpE family.</text>
</comment>
<sequence>MTASQEPVDQAPESNEPAPAVPATVEALQAELAAVRAELEAAQATVAGQQEQVLRARADAENVRRRAQEDVSKARKFGIESFAESLVPVKDSLEAALAQPDQTLEALREGVEVTLKQLTGAFERNLLKEIAPAQGDKFDPHLHQAISSVPSDQPANTVAQLLQKGYAIADRTLRPALVIVSAGQA</sequence>
<reference key="1">
    <citation type="journal article" date="2008" name="BMC Genomics">
        <title>The missing link: Bordetella petrii is endowed with both the metabolic versatility of environmental bacteria and virulence traits of pathogenic Bordetellae.</title>
        <authorList>
            <person name="Gross R."/>
            <person name="Guzman C.A."/>
            <person name="Sebaihia M."/>
            <person name="Martin dos Santos V.A.P."/>
            <person name="Pieper D.H."/>
            <person name="Koebnik R."/>
            <person name="Lechner M."/>
            <person name="Bartels D."/>
            <person name="Buhrmester J."/>
            <person name="Choudhuri J.V."/>
            <person name="Ebensen T."/>
            <person name="Gaigalat L."/>
            <person name="Herrmann S."/>
            <person name="Khachane A.N."/>
            <person name="Larisch C."/>
            <person name="Link S."/>
            <person name="Linke B."/>
            <person name="Meyer F."/>
            <person name="Mormann S."/>
            <person name="Nakunst D."/>
            <person name="Rueckert C."/>
            <person name="Schneiker-Bekel S."/>
            <person name="Schulze K."/>
            <person name="Voerholter F.-J."/>
            <person name="Yevsa T."/>
            <person name="Engle J.T."/>
            <person name="Goldman W.E."/>
            <person name="Puehler A."/>
            <person name="Goebel U.B."/>
            <person name="Goesmann A."/>
            <person name="Bloecker H."/>
            <person name="Kaiser O."/>
            <person name="Martinez-Arias R."/>
        </authorList>
    </citation>
    <scope>NUCLEOTIDE SEQUENCE [LARGE SCALE GENOMIC DNA]</scope>
    <source>
        <strain>ATCC BAA-461 / DSM 12804 / CCUG 43448</strain>
    </source>
</reference>